<name>CAPSD_HBVC7</name>
<feature type="chain" id="PRO_0000324366" description="Capsid protein">
    <location>
        <begin position="1"/>
        <end position="183"/>
    </location>
</feature>
<feature type="repeat" description="1; half-length">
    <location>
        <begin position="155"/>
        <end position="161"/>
    </location>
</feature>
<feature type="repeat" description="2">
    <location>
        <begin position="162"/>
        <end position="169"/>
    </location>
</feature>
<feature type="repeat" description="3">
    <location>
        <begin position="170"/>
        <end position="177"/>
    </location>
</feature>
<feature type="region of interest" description="Disordered" evidence="2">
    <location>
        <begin position="136"/>
        <end position="183"/>
    </location>
</feature>
<feature type="region of interest" description="3 X 8 AA repeats of S-P-R-R-R-[PR]-S-Q">
    <location>
        <begin position="155"/>
        <end position="177"/>
    </location>
</feature>
<feature type="region of interest" description="RNA binding" evidence="1">
    <location>
        <begin position="177"/>
        <end position="183"/>
    </location>
</feature>
<feature type="short sequence motif" description="Bipartite nuclear localization signal" evidence="1">
    <location>
        <begin position="158"/>
        <end position="175"/>
    </location>
</feature>
<feature type="compositionally biased region" description="Basic residues" evidence="2">
    <location>
        <begin position="149"/>
        <end position="176"/>
    </location>
</feature>
<feature type="modified residue" description="Phosphoserine; by host" evidence="1">
    <location>
        <position position="155"/>
    </location>
</feature>
<feature type="modified residue" description="Phosphoserine; by host" evidence="1">
    <location>
        <position position="162"/>
    </location>
</feature>
<feature type="modified residue" description="Phosphoserine; by host" evidence="1">
    <location>
        <position position="170"/>
    </location>
</feature>
<comment type="function">
    <text evidence="1">Self assembles to form an icosahedral capsid. Most capsids appear to be large particles with an icosahedral symmetry of T=4 and consist of 240 copies of capsid protein, though a fraction forms smaller T=3 particles consisting of 180 capsid proteins. Entering capsids are transported along microtubules to the nucleus. Phosphorylation of the capsid is thought to induce exposure of nuclear localization signal in the C-terminal portion of the capsid protein that allows binding to the nuclear pore complex via the importin (karyopherin-) alpha and beta. Capsids are imported in intact form through the nuclear pore into the nuclear basket, where it probably binds NUP153. Only capsids that contain the mature viral genome can release the viral DNA and capsid protein into the nucleoplasm. Immature capsids get stuck in the basket. Capsids encapsulate the pre-genomic RNA and the P protein. Pre-genomic RNA is reverse-transcribed into DNA while the capsid is still in the cytoplasm. The capsid can then either be directed to the nucleus, providing more genomes for transcription, or bud through the endoplasmic reticulum to provide new virions.</text>
</comment>
<comment type="subunit">
    <text evidence="1">Homodimerizes, then multimerizes. Interacts with cytosol exposed regions of viral L glycoprotein present in the reticulum-to-Golgi compartment. Interacts with human FLNB. Phosphorylated form interacts with host importin alpha; this interaction depends on the exposure of the NLS, which itself depends upon genome maturation and/or phosphorylation of the capsid protein. Interacts with host NUP153.</text>
</comment>
<comment type="subcellular location">
    <subcellularLocation>
        <location evidence="1">Virion</location>
    </subcellularLocation>
    <subcellularLocation>
        <location evidence="1">Host cytoplasm</location>
    </subcellularLocation>
</comment>
<comment type="alternative products">
    <event type="alternative initiation"/>
    <isoform>
        <id>P0C6H7-1</id>
        <name>Capsid protein</name>
        <sequence type="displayed"/>
    </isoform>
    <isoform>
        <id>Q913A8-1</id>
        <name>External core antigen</name>
        <sequence type="external"/>
    </isoform>
</comment>
<comment type="PTM">
    <text evidence="1">Phosphorylated by host SRPK1, SRPK2, and maybe protein kinase C or GAPDH. Phosphorylation is critical for pregenomic RNA packaging. Protein kinase C phosphorylation is stimulated by HBx protein and may play a role in transport of the viral genome to the nucleus at the late step during the viral replication cycle.</text>
</comment>
<comment type="similarity">
    <text evidence="1">Belongs to the orthohepadnavirus core antigen family.</text>
</comment>
<reference key="1">
    <citation type="journal article" date="2002" name="J. Gen. Virol.">
        <title>The dominant hepatitis B virus genotype identified in Tibet is a C/D hybrid.</title>
        <authorList>
            <person name="Cui C."/>
            <person name="Shi J."/>
            <person name="Hui L."/>
            <person name="Xi H."/>
            <person name="Zhuoma X."/>
            <person name="Quni X."/>
            <person name="Tsedan X."/>
            <person name="Hu G."/>
        </authorList>
    </citation>
    <scope>NUCLEOTIDE SEQUENCE [GENOMIC DNA]</scope>
</reference>
<evidence type="ECO:0000255" key="1">
    <source>
        <dbReference type="HAMAP-Rule" id="MF_04076"/>
    </source>
</evidence>
<evidence type="ECO:0000256" key="2">
    <source>
        <dbReference type="SAM" id="MobiDB-lite"/>
    </source>
</evidence>
<gene>
    <name evidence="1" type="primary">C</name>
</gene>
<protein>
    <recommendedName>
        <fullName evidence="1">Capsid protein</fullName>
    </recommendedName>
    <alternativeName>
        <fullName evidence="1">Core antigen</fullName>
    </alternativeName>
    <alternativeName>
        <fullName evidence="1">Core protein</fullName>
    </alternativeName>
    <alternativeName>
        <fullName evidence="1">HBcAg</fullName>
    </alternativeName>
    <alternativeName>
        <fullName evidence="1">p21.5</fullName>
    </alternativeName>
</protein>
<keyword id="KW-0024">Alternative initiation</keyword>
<keyword id="KW-0167">Capsid protein</keyword>
<keyword id="KW-1176">Cytoplasmic inwards viral transport</keyword>
<keyword id="KW-0238">DNA-binding</keyword>
<keyword id="KW-1035">Host cytoplasm</keyword>
<keyword id="KW-0945">Host-virus interaction</keyword>
<keyword id="KW-1177">Microtubular inwards viral transport</keyword>
<keyword id="KW-0597">Phosphoprotein</keyword>
<keyword id="KW-0677">Repeat</keyword>
<keyword id="KW-0694">RNA-binding</keyword>
<keyword id="KW-1144">T=4 icosahedral capsid protein</keyword>
<keyword id="KW-1163">Viral penetration into host nucleus</keyword>
<keyword id="KW-0946">Virion</keyword>
<keyword id="KW-1160">Virus entry into host cell</keyword>
<organismHost>
    <name type="scientific">Homo sapiens</name>
    <name type="common">Human</name>
    <dbReference type="NCBI Taxonomy" id="9606"/>
</organismHost>
<organismHost>
    <name type="scientific">Pan troglodytes</name>
    <name type="common">Chimpanzee</name>
    <dbReference type="NCBI Taxonomy" id="9598"/>
</organismHost>
<organism>
    <name type="scientific">Hepatitis B virus genotype C subtype ayw (isolate China/Tibet127/2002)</name>
    <name type="common">HBV-C</name>
    <dbReference type="NCBI Taxonomy" id="489469"/>
    <lineage>
        <taxon>Viruses</taxon>
        <taxon>Riboviria</taxon>
        <taxon>Pararnavirae</taxon>
        <taxon>Artverviricota</taxon>
        <taxon>Revtraviricetes</taxon>
        <taxon>Blubervirales</taxon>
        <taxon>Hepadnaviridae</taxon>
        <taxon>Orthohepadnavirus</taxon>
        <taxon>Hepatitis B virus</taxon>
        <taxon>hepatitis B virus genotype C</taxon>
    </lineage>
</organism>
<dbReference type="EMBL" id="AY057948">
    <property type="status" value="NOT_ANNOTATED_CDS"/>
    <property type="molecule type" value="Genomic_DNA"/>
</dbReference>
<dbReference type="SMR" id="P0C6H7"/>
<dbReference type="Proteomes" id="UP000007925">
    <property type="component" value="Genome"/>
</dbReference>
<dbReference type="GO" id="GO:0043657">
    <property type="term" value="C:host cell"/>
    <property type="evidence" value="ECO:0007669"/>
    <property type="project" value="GOC"/>
</dbReference>
<dbReference type="GO" id="GO:0030430">
    <property type="term" value="C:host cell cytoplasm"/>
    <property type="evidence" value="ECO:0007669"/>
    <property type="project" value="UniProtKB-SubCell"/>
</dbReference>
<dbReference type="GO" id="GO:0039619">
    <property type="term" value="C:T=4 icosahedral viral capsid"/>
    <property type="evidence" value="ECO:0007669"/>
    <property type="project" value="UniProtKB-UniRule"/>
</dbReference>
<dbReference type="GO" id="GO:0003677">
    <property type="term" value="F:DNA binding"/>
    <property type="evidence" value="ECO:0007669"/>
    <property type="project" value="UniProtKB-UniRule"/>
</dbReference>
<dbReference type="GO" id="GO:0003723">
    <property type="term" value="F:RNA binding"/>
    <property type="evidence" value="ECO:0007669"/>
    <property type="project" value="UniProtKB-UniRule"/>
</dbReference>
<dbReference type="GO" id="GO:0005198">
    <property type="term" value="F:structural molecule activity"/>
    <property type="evidence" value="ECO:0007669"/>
    <property type="project" value="UniProtKB-UniRule"/>
</dbReference>
<dbReference type="GO" id="GO:0075521">
    <property type="term" value="P:microtubule-dependent intracellular transport of viral material towards nucleus"/>
    <property type="evidence" value="ECO:0007669"/>
    <property type="project" value="UniProtKB-UniRule"/>
</dbReference>
<dbReference type="GO" id="GO:0046718">
    <property type="term" value="P:symbiont entry into host cell"/>
    <property type="evidence" value="ECO:0007669"/>
    <property type="project" value="UniProtKB-UniRule"/>
</dbReference>
<dbReference type="GO" id="GO:0075732">
    <property type="term" value="P:viral penetration into host nucleus"/>
    <property type="evidence" value="ECO:0007669"/>
    <property type="project" value="UniProtKB-UniRule"/>
</dbReference>
<dbReference type="FunFam" id="1.10.4090.10:FF:000001">
    <property type="entry name" value="Capsid protein"/>
    <property type="match status" value="1"/>
</dbReference>
<dbReference type="Gene3D" id="1.10.4090.10">
    <property type="entry name" value="Viral capsid, core domain supefamily, Hepatitis B virus"/>
    <property type="match status" value="1"/>
</dbReference>
<dbReference type="HAMAP" id="MF_04076">
    <property type="entry name" value="HBV_HBEAG"/>
    <property type="match status" value="1"/>
</dbReference>
<dbReference type="InterPro" id="IPR002006">
    <property type="entry name" value="Hepatitis_core"/>
</dbReference>
<dbReference type="InterPro" id="IPR036459">
    <property type="entry name" value="Viral_capsid_core_dom_sf_HBV"/>
</dbReference>
<dbReference type="Pfam" id="PF00906">
    <property type="entry name" value="Hepatitis_core"/>
    <property type="match status" value="3"/>
</dbReference>
<dbReference type="SUPFAM" id="SSF47852">
    <property type="entry name" value="Hepatitis B viral capsid (hbcag)"/>
    <property type="match status" value="1"/>
</dbReference>
<sequence>MDIDPYKEFGASVEVLSFLPSDFFPSNRDLLDTASALDREALESPEHCSPHHTALRQAILCWGELMNLATWVGSNLEDPASRELVVSYVNVNMGLKIRQLLWFHISCLTFGRETVLEYLVSFGVWIRTPPAYRPPNAPILSTLPETTVVRRRGRSPRRRTPSPRRRRSQSPRRRRSQSRESQC</sequence>
<proteinExistence type="inferred from homology"/>
<accession>P0C6H7</accession>